<protein>
    <recommendedName>
        <fullName>Arrestin-related trafficking adapter 10</fullName>
    </recommendedName>
</protein>
<dbReference type="EMBL" id="FN393080">
    <property type="protein sequence ID" value="CAY81617.1"/>
    <property type="molecule type" value="Genomic_DNA"/>
</dbReference>
<dbReference type="HOGENOM" id="CLU_540776_0_0_1"/>
<dbReference type="OrthoDB" id="4352at4893"/>
<dbReference type="Proteomes" id="UP000000286">
    <property type="component" value="Chromosome XII, Scaffold EC1118_1L7"/>
</dbReference>
<dbReference type="GO" id="GO:0005737">
    <property type="term" value="C:cytoplasm"/>
    <property type="evidence" value="ECO:0007669"/>
    <property type="project" value="UniProtKB-SubCell"/>
</dbReference>
<dbReference type="GO" id="GO:0006897">
    <property type="term" value="P:endocytosis"/>
    <property type="evidence" value="ECO:0007669"/>
    <property type="project" value="UniProtKB-KW"/>
</dbReference>
<dbReference type="CDD" id="cd22952">
    <property type="entry name" value="ART10-like"/>
    <property type="match status" value="1"/>
</dbReference>
<dbReference type="FunFam" id="2.60.40.640:FF:000038">
    <property type="entry name" value="Arrestin-related trafficking adapter 10"/>
    <property type="match status" value="1"/>
</dbReference>
<dbReference type="Gene3D" id="2.60.40.640">
    <property type="match status" value="1"/>
</dbReference>
<dbReference type="InterPro" id="IPR014752">
    <property type="entry name" value="Arrestin-like_C"/>
</dbReference>
<keyword id="KW-0963">Cytoplasm</keyword>
<keyword id="KW-0254">Endocytosis</keyword>
<keyword id="KW-1017">Isopeptide bond</keyword>
<keyword id="KW-0832">Ubl conjugation</keyword>
<comment type="function">
    <text evidence="1">May regulate endocytosis by recruiting RSP5 ubiquitin ligase activity to specific plasma membrane proteins in response to extracellular stimuli.</text>
</comment>
<comment type="subunit">
    <text evidence="1">Interacts with RSP5.</text>
</comment>
<comment type="subcellular location">
    <subcellularLocation>
        <location evidence="1">Cytoplasm</location>
    </subcellularLocation>
</comment>
<comment type="PTM">
    <text evidence="1">Ubiquitinated by RSP5.</text>
</comment>
<comment type="similarity">
    <text evidence="3">Belongs to the ART10 family.</text>
</comment>
<gene>
    <name type="primary">ART10</name>
    <name type="ORF">EC1118_1L7_2685g</name>
</gene>
<organism>
    <name type="scientific">Saccharomyces cerevisiae (strain Lalvin EC1118 / Prise de mousse)</name>
    <name type="common">Baker's yeast</name>
    <dbReference type="NCBI Taxonomy" id="643680"/>
    <lineage>
        <taxon>Eukaryota</taxon>
        <taxon>Fungi</taxon>
        <taxon>Dikarya</taxon>
        <taxon>Ascomycota</taxon>
        <taxon>Saccharomycotina</taxon>
        <taxon>Saccharomycetes</taxon>
        <taxon>Saccharomycetales</taxon>
        <taxon>Saccharomycetaceae</taxon>
        <taxon>Saccharomyces</taxon>
    </lineage>
</organism>
<sequence>MAPKISISLNPPYNGEFYSSNDQMSGIVSLQLTKALSIRKISVILKGFSETLTKIDQEYMFQQNGMMMPGQDNKSFHTLMKFEQRVFPPDNVWNALDGSSKPFKVKPGSYNYSFQFEKFPRKPECLKNHTAKTVAFVTRNNARLPPTFNSHWQEFNKIDNLDLYFYSFGKVIYMVQVQIELGKSSSWFKPFHKLIREIETFEFIPEPKDLIVEPDEDDNEELNAFSNNSRGNSLVTNNEFFNSSNLKVPSKDVKVVNGVGYIKSDRNFSQANSILIENGDIRSRPVSSVTSTRQSTRLVNGMKVFPSTYKMGLPDGESNMRIEVRSRDLKQIYRKDYLFRSGSQNFDKVYVVMEGNIASLSKMQITPLKLQLNLLETTTYLSQGIANGNYSSLKLIEIDLNQLKSNKPLLDLNEIRENFDGSMFECELRLKDHPILRKLVFNEEDYRHRGNRLYSFKTCTIKRIFSLQLLIEWGINGIRKQSEVNIDPVQIFCQVREHVEAEALPRYVPPPTYTEMAS</sequence>
<feature type="chain" id="PRO_0000402196" description="Arrestin-related trafficking adapter 10">
    <location>
        <begin position="1"/>
        <end position="518"/>
    </location>
</feature>
<feature type="cross-link" description="Glycyl lysine isopeptide (Lys-Gly) (interchain with G-Cter in ubiquitin)" evidence="2">
    <location>
        <position position="118"/>
    </location>
</feature>
<reference key="1">
    <citation type="journal article" date="2009" name="Proc. Natl. Acad. Sci. U.S.A.">
        <title>Eukaryote-to-eukaryote gene transfer events revealed by the genome sequence of the wine yeast Saccharomyces cerevisiae EC1118.</title>
        <authorList>
            <person name="Novo M."/>
            <person name="Bigey F."/>
            <person name="Beyne E."/>
            <person name="Galeote V."/>
            <person name="Gavory F."/>
            <person name="Mallet S."/>
            <person name="Cambon B."/>
            <person name="Legras J.-L."/>
            <person name="Wincker P."/>
            <person name="Casaregola S."/>
            <person name="Dequin S."/>
        </authorList>
    </citation>
    <scope>NUCLEOTIDE SEQUENCE [LARGE SCALE GENOMIC DNA]</scope>
    <source>
        <strain>Lalvin EC1118 / Prise de mousse</strain>
    </source>
</reference>
<evidence type="ECO:0000250" key="1"/>
<evidence type="ECO:0000250" key="2">
    <source>
        <dbReference type="UniProtKB" id="P18634"/>
    </source>
</evidence>
<evidence type="ECO:0000305" key="3"/>
<proteinExistence type="inferred from homology"/>
<accession>C8ZE01</accession>
<name>ART10_YEAS8</name>